<comment type="function">
    <text evidence="1">Required for the formation of axial filaments and for anchoring the origin regions at the cell poles in sporulating cells, thus ensuring proper chromosome segregation in the prespore. Binds in a dispersed manner throughout the chromosome but preferentially to sites clustered in the origin portion of the chromosome, causing condensation of the chromosome and its remodeling into an elongated, anchored structure.</text>
</comment>
<comment type="subcellular location">
    <subcellularLocation>
        <location evidence="1">Cytoplasm</location>
    </subcellularLocation>
    <text evidence="1">Localizes to cell poles and nucleoid.</text>
</comment>
<comment type="similarity">
    <text evidence="1">Belongs to the RacA family.</text>
</comment>
<accession>Q63BQ9</accession>
<name>RACA_BACCZ</name>
<organism>
    <name type="scientific">Bacillus cereus (strain ZK / E33L)</name>
    <dbReference type="NCBI Taxonomy" id="288681"/>
    <lineage>
        <taxon>Bacteria</taxon>
        <taxon>Bacillati</taxon>
        <taxon>Bacillota</taxon>
        <taxon>Bacilli</taxon>
        <taxon>Bacillales</taxon>
        <taxon>Bacillaceae</taxon>
        <taxon>Bacillus</taxon>
        <taxon>Bacillus cereus group</taxon>
    </lineage>
</organism>
<protein>
    <recommendedName>
        <fullName evidence="1">Chromosome-anchoring protein RacA</fullName>
    </recommendedName>
</protein>
<gene>
    <name evidence="1" type="primary">racA</name>
    <name type="ordered locus">BCE33L2067</name>
</gene>
<proteinExistence type="inferred from homology"/>
<keyword id="KW-0131">Cell cycle</keyword>
<keyword id="KW-0132">Cell division</keyword>
<keyword id="KW-0159">Chromosome partition</keyword>
<keyword id="KW-0175">Coiled coil</keyword>
<keyword id="KW-0963">Cytoplasm</keyword>
<keyword id="KW-0238">DNA-binding</keyword>
<keyword id="KW-0749">Sporulation</keyword>
<evidence type="ECO:0000255" key="1">
    <source>
        <dbReference type="HAMAP-Rule" id="MF_01170"/>
    </source>
</evidence>
<sequence length="180" mass="21311">MEYKTPFIAKKLGVSPKAVVRIAQQLNLTIEKNKYGHFIFTQDDLDQMLEYHRSQIEQSQNTHPTQKTSSNDVEELKTQVNTIVQNISSHDFEQLAAQLNTITRRLDRMEEQMQDKANDVVTYQLLQHRREMEEMLERIQKLEAGLKKEEPIYITPDTKPTYEREKKPKRRKMIFSIFGL</sequence>
<dbReference type="EMBL" id="CP000001">
    <property type="protein sequence ID" value="AAU18191.1"/>
    <property type="molecule type" value="Genomic_DNA"/>
</dbReference>
<dbReference type="RefSeq" id="WP_000456010.1">
    <property type="nucleotide sequence ID" value="NZ_CP009968.1"/>
</dbReference>
<dbReference type="SMR" id="Q63BQ9"/>
<dbReference type="GeneID" id="45022176"/>
<dbReference type="KEGG" id="bcz:BCE33L2067"/>
<dbReference type="PATRIC" id="fig|288681.22.peg.3456"/>
<dbReference type="Proteomes" id="UP000002612">
    <property type="component" value="Chromosome"/>
</dbReference>
<dbReference type="GO" id="GO:0005737">
    <property type="term" value="C:cytoplasm"/>
    <property type="evidence" value="ECO:0007669"/>
    <property type="project" value="UniProtKB-SubCell"/>
</dbReference>
<dbReference type="GO" id="GO:0003690">
    <property type="term" value="F:double-stranded DNA binding"/>
    <property type="evidence" value="ECO:0007669"/>
    <property type="project" value="UniProtKB-UniRule"/>
</dbReference>
<dbReference type="GO" id="GO:0008356">
    <property type="term" value="P:asymmetric cell division"/>
    <property type="evidence" value="ECO:0007669"/>
    <property type="project" value="UniProtKB-UniRule"/>
</dbReference>
<dbReference type="GO" id="GO:0030261">
    <property type="term" value="P:chromosome condensation"/>
    <property type="evidence" value="ECO:0007669"/>
    <property type="project" value="UniProtKB-UniRule"/>
</dbReference>
<dbReference type="GO" id="GO:0007059">
    <property type="term" value="P:chromosome segregation"/>
    <property type="evidence" value="ECO:0007669"/>
    <property type="project" value="UniProtKB-UniRule"/>
</dbReference>
<dbReference type="GO" id="GO:0030435">
    <property type="term" value="P:sporulation resulting in formation of a cellular spore"/>
    <property type="evidence" value="ECO:0007669"/>
    <property type="project" value="UniProtKB-UniRule"/>
</dbReference>
<dbReference type="Gene3D" id="1.10.1660.10">
    <property type="match status" value="1"/>
</dbReference>
<dbReference type="HAMAP" id="MF_01170">
    <property type="entry name" value="RacA"/>
    <property type="match status" value="1"/>
</dbReference>
<dbReference type="InterPro" id="IPR023522">
    <property type="entry name" value="Chrosome_anchoring_RacA"/>
</dbReference>
<dbReference type="NCBIfam" id="NF009646">
    <property type="entry name" value="PRK13182.1-1"/>
    <property type="match status" value="1"/>
</dbReference>
<dbReference type="SUPFAM" id="SSF58064">
    <property type="entry name" value="Influenza hemagglutinin (stalk)"/>
    <property type="match status" value="1"/>
</dbReference>
<reference key="1">
    <citation type="journal article" date="2006" name="J. Bacteriol.">
        <title>Pathogenomic sequence analysis of Bacillus cereus and Bacillus thuringiensis isolates closely related to Bacillus anthracis.</title>
        <authorList>
            <person name="Han C.S."/>
            <person name="Xie G."/>
            <person name="Challacombe J.F."/>
            <person name="Altherr M.R."/>
            <person name="Bhotika S.S."/>
            <person name="Bruce D."/>
            <person name="Campbell C.S."/>
            <person name="Campbell M.L."/>
            <person name="Chen J."/>
            <person name="Chertkov O."/>
            <person name="Cleland C."/>
            <person name="Dimitrijevic M."/>
            <person name="Doggett N.A."/>
            <person name="Fawcett J.J."/>
            <person name="Glavina T."/>
            <person name="Goodwin L.A."/>
            <person name="Hill K.K."/>
            <person name="Hitchcock P."/>
            <person name="Jackson P.J."/>
            <person name="Keim P."/>
            <person name="Kewalramani A.R."/>
            <person name="Longmire J."/>
            <person name="Lucas S."/>
            <person name="Malfatti S."/>
            <person name="McMurry K."/>
            <person name="Meincke L.J."/>
            <person name="Misra M."/>
            <person name="Moseman B.L."/>
            <person name="Mundt M."/>
            <person name="Munk A.C."/>
            <person name="Okinaka R.T."/>
            <person name="Parson-Quintana B."/>
            <person name="Reilly L.P."/>
            <person name="Richardson P."/>
            <person name="Robinson D.L."/>
            <person name="Rubin E."/>
            <person name="Saunders E."/>
            <person name="Tapia R."/>
            <person name="Tesmer J.G."/>
            <person name="Thayer N."/>
            <person name="Thompson L.S."/>
            <person name="Tice H."/>
            <person name="Ticknor L.O."/>
            <person name="Wills P.L."/>
            <person name="Brettin T.S."/>
            <person name="Gilna P."/>
        </authorList>
    </citation>
    <scope>NUCLEOTIDE SEQUENCE [LARGE SCALE GENOMIC DNA]</scope>
    <source>
        <strain>ZK / E33L</strain>
    </source>
</reference>
<feature type="chain" id="PRO_0000224153" description="Chromosome-anchoring protein RacA">
    <location>
        <begin position="1"/>
        <end position="180"/>
    </location>
</feature>
<feature type="DNA-binding region" description="H-T-H motif" evidence="1">
    <location>
        <begin position="5"/>
        <end position="25"/>
    </location>
</feature>
<feature type="coiled-coil region" evidence="1">
    <location>
        <begin position="90"/>
        <end position="150"/>
    </location>
</feature>